<feature type="signal peptide" evidence="8">
    <location>
        <begin position="1"/>
        <end position="30"/>
    </location>
</feature>
<feature type="chain" id="PRO_0000234052" description="Brother of CDO">
    <location>
        <begin position="31"/>
        <end position="1114"/>
    </location>
</feature>
<feature type="topological domain" description="Extracellular" evidence="2">
    <location>
        <begin position="31"/>
        <end position="855"/>
    </location>
</feature>
<feature type="transmembrane region" description="Helical" evidence="2">
    <location>
        <begin position="856"/>
        <end position="876"/>
    </location>
</feature>
<feature type="topological domain" description="Cytoplasmic" evidence="2">
    <location>
        <begin position="877"/>
        <end position="1114"/>
    </location>
</feature>
<feature type="domain" description="Ig-like C2-type 1">
    <location>
        <begin position="36"/>
        <end position="123"/>
    </location>
</feature>
<feature type="domain" description="Ig-like C2-type 2">
    <location>
        <begin position="129"/>
        <end position="213"/>
    </location>
</feature>
<feature type="domain" description="Ig-like C2-type 3">
    <location>
        <begin position="235"/>
        <end position="315"/>
    </location>
</feature>
<feature type="domain" description="Ig-like C2-type 4">
    <location>
        <begin position="323"/>
        <end position="409"/>
    </location>
</feature>
<feature type="domain" description="Fibronectin type-III 1" evidence="4">
    <location>
        <begin position="474"/>
        <end position="571"/>
    </location>
</feature>
<feature type="domain" description="Fibronectin type-III 2" evidence="4">
    <location>
        <begin position="608"/>
        <end position="703"/>
    </location>
</feature>
<feature type="domain" description="Fibronectin type-III 3" evidence="4">
    <location>
        <begin position="712"/>
        <end position="812"/>
    </location>
</feature>
<feature type="region of interest" description="Disordered" evidence="5">
    <location>
        <begin position="422"/>
        <end position="474"/>
    </location>
</feature>
<feature type="region of interest" description="Disordered" evidence="5">
    <location>
        <begin position="577"/>
        <end position="615"/>
    </location>
</feature>
<feature type="region of interest" description="Disordered" evidence="5">
    <location>
        <begin position="812"/>
        <end position="833"/>
    </location>
</feature>
<feature type="region of interest" description="Disordered" evidence="5">
    <location>
        <begin position="972"/>
        <end position="998"/>
    </location>
</feature>
<feature type="compositionally biased region" description="Pro residues" evidence="5">
    <location>
        <begin position="820"/>
        <end position="833"/>
    </location>
</feature>
<feature type="compositionally biased region" description="Polar residues" evidence="5">
    <location>
        <begin position="972"/>
        <end position="986"/>
    </location>
</feature>
<feature type="glycosylation site" description="N-linked (GlcNAc...) asparagine" evidence="2">
    <location>
        <position position="65"/>
    </location>
</feature>
<feature type="glycosylation site" description="N-linked (GlcNAc...) asparagine" evidence="2">
    <location>
        <position position="76"/>
    </location>
</feature>
<feature type="glycosylation site" description="N-linked (GlcNAc...) asparagine" evidence="2">
    <location>
        <position position="98"/>
    </location>
</feature>
<feature type="glycosylation site" description="N-linked (GlcNAc...) asparagine" evidence="2">
    <location>
        <position position="189"/>
    </location>
</feature>
<feature type="glycosylation site" description="N-linked (GlcNAc...) asparagine" evidence="2">
    <location>
        <position position="275"/>
    </location>
</feature>
<feature type="glycosylation site" description="N-linked (GlcNAc...) asparagine" evidence="2">
    <location>
        <position position="517"/>
    </location>
</feature>
<feature type="glycosylation site" description="N-linked (GlcNAc...) asparagine" evidence="2">
    <location>
        <position position="725"/>
    </location>
</feature>
<feature type="glycosylation site" description="N-linked (GlcNAc...) asparagine" evidence="2">
    <location>
        <position position="759"/>
    </location>
</feature>
<feature type="disulfide bond" evidence="3">
    <location>
        <begin position="57"/>
        <end position="106"/>
    </location>
</feature>
<feature type="disulfide bond" evidence="3">
    <location>
        <begin position="150"/>
        <end position="200"/>
    </location>
</feature>
<feature type="disulfide bond" evidence="3">
    <location>
        <begin position="252"/>
        <end position="299"/>
    </location>
</feature>
<feature type="disulfide bond" evidence="3">
    <location>
        <begin position="344"/>
        <end position="391"/>
    </location>
</feature>
<feature type="splice variant" id="VSP_034684" description="In isoform 2." evidence="11 12">
    <original>K</original>
    <variation>KQ</variation>
    <location>
        <position position="514"/>
    </location>
</feature>
<feature type="sequence variant" id="VAR_035503" description="In a breast cancer sample; somatic mutation; dbSNP:rs367589886." evidence="9">
    <original>V</original>
    <variation>M</variation>
    <location>
        <position position="713"/>
    </location>
</feature>
<feature type="sequence variant" id="VAR_033600" description="In dbSNP:rs35536878.">
    <original>K</original>
    <variation>N</variation>
    <location>
        <position position="883"/>
    </location>
</feature>
<feature type="sequence variant" id="VAR_033601" description="In dbSNP:rs3814405.">
    <original>Q</original>
    <variation>H</variation>
    <location>
        <position position="915"/>
    </location>
</feature>
<feature type="sequence conflict" description="In Ref. 2; AAQ88694." evidence="13" ref="2">
    <original>Q</original>
    <variation>K</variation>
    <location>
        <position position="461"/>
    </location>
</feature>
<feature type="strand" evidence="14">
    <location>
        <begin position="717"/>
        <end position="725"/>
    </location>
</feature>
<feature type="strand" evidence="14">
    <location>
        <begin position="728"/>
        <end position="734"/>
    </location>
</feature>
<feature type="helix" evidence="14">
    <location>
        <begin position="737"/>
        <end position="740"/>
    </location>
</feature>
<feature type="strand" evidence="14">
    <location>
        <begin position="746"/>
        <end position="754"/>
    </location>
</feature>
<feature type="helix" evidence="14">
    <location>
        <begin position="760"/>
        <end position="762"/>
    </location>
</feature>
<feature type="strand" evidence="14">
    <location>
        <begin position="764"/>
        <end position="769"/>
    </location>
</feature>
<feature type="strand" evidence="14">
    <location>
        <begin position="774"/>
        <end position="777"/>
    </location>
</feature>
<feature type="strand" evidence="14">
    <location>
        <begin position="785"/>
        <end position="794"/>
    </location>
</feature>
<feature type="strand" evidence="14">
    <location>
        <begin position="805"/>
        <end position="808"/>
    </location>
</feature>
<proteinExistence type="evidence at protein level"/>
<organism>
    <name type="scientific">Homo sapiens</name>
    <name type="common">Human</name>
    <dbReference type="NCBI Taxonomy" id="9606"/>
    <lineage>
        <taxon>Eukaryota</taxon>
        <taxon>Metazoa</taxon>
        <taxon>Chordata</taxon>
        <taxon>Craniata</taxon>
        <taxon>Vertebrata</taxon>
        <taxon>Euteleostomi</taxon>
        <taxon>Mammalia</taxon>
        <taxon>Eutheria</taxon>
        <taxon>Euarchontoglires</taxon>
        <taxon>Primates</taxon>
        <taxon>Haplorrhini</taxon>
        <taxon>Catarrhini</taxon>
        <taxon>Hominidae</taxon>
        <taxon>Homo</taxon>
    </lineage>
</organism>
<name>BOC_HUMAN</name>
<dbReference type="EMBL" id="AY027658">
    <property type="protein sequence ID" value="AAK14795.1"/>
    <property type="molecule type" value="mRNA"/>
</dbReference>
<dbReference type="EMBL" id="AY358328">
    <property type="protein sequence ID" value="AAQ88694.1"/>
    <property type="molecule type" value="mRNA"/>
</dbReference>
<dbReference type="EMBL" id="AK074556">
    <property type="protein sequence ID" value="BAC11057.1"/>
    <property type="status" value="ALT_INIT"/>
    <property type="molecule type" value="mRNA"/>
</dbReference>
<dbReference type="EMBL" id="AK090455">
    <property type="protein sequence ID" value="BAC03436.1"/>
    <property type="status" value="ALT_SEQ"/>
    <property type="molecule type" value="mRNA"/>
</dbReference>
<dbReference type="EMBL" id="AC026329">
    <property type="status" value="NOT_ANNOTATED_CDS"/>
    <property type="molecule type" value="Genomic_DNA"/>
</dbReference>
<dbReference type="EMBL" id="CH471052">
    <property type="protein sequence ID" value="EAW79643.1"/>
    <property type="molecule type" value="Genomic_DNA"/>
</dbReference>
<dbReference type="EMBL" id="CH471052">
    <property type="protein sequence ID" value="EAW79644.1"/>
    <property type="molecule type" value="Genomic_DNA"/>
</dbReference>
<dbReference type="EMBL" id="CH471052">
    <property type="protein sequence ID" value="EAW79646.1"/>
    <property type="molecule type" value="Genomic_DNA"/>
</dbReference>
<dbReference type="EMBL" id="BC136390">
    <property type="protein sequence ID" value="AAI36391.1"/>
    <property type="molecule type" value="mRNA"/>
</dbReference>
<dbReference type="CCDS" id="CCDS2971.1">
    <molecule id="Q9BWV1-1"/>
</dbReference>
<dbReference type="CCDS" id="CCDS77788.1">
    <molecule id="Q9BWV1-3"/>
</dbReference>
<dbReference type="RefSeq" id="NP_001288790.1">
    <molecule id="Q9BWV1-3"/>
    <property type="nucleotide sequence ID" value="NM_001301861.2"/>
</dbReference>
<dbReference type="RefSeq" id="NP_001365002.1">
    <molecule id="Q9BWV1-3"/>
    <property type="nucleotide sequence ID" value="NM_001378073.1"/>
</dbReference>
<dbReference type="RefSeq" id="NP_001365003.1">
    <molecule id="Q9BWV1-3"/>
    <property type="nucleotide sequence ID" value="NM_001378074.1"/>
</dbReference>
<dbReference type="RefSeq" id="NP_001365004.1">
    <molecule id="Q9BWV1-1"/>
    <property type="nucleotide sequence ID" value="NM_001378075.1"/>
</dbReference>
<dbReference type="RefSeq" id="NP_001374848.1">
    <molecule id="Q9BWV1-3"/>
    <property type="nucleotide sequence ID" value="NM_001387919.1"/>
</dbReference>
<dbReference type="RefSeq" id="NP_001374849.1">
    <molecule id="Q9BWV1-1"/>
    <property type="nucleotide sequence ID" value="NM_001387920.1"/>
</dbReference>
<dbReference type="RefSeq" id="NP_001374850.1">
    <molecule id="Q9BWV1-1"/>
    <property type="nucleotide sequence ID" value="NM_001387921.1"/>
</dbReference>
<dbReference type="RefSeq" id="NP_150279.1">
    <molecule id="Q9BWV1-1"/>
    <property type="nucleotide sequence ID" value="NM_033254.4"/>
</dbReference>
<dbReference type="RefSeq" id="XP_005247948.1">
    <property type="nucleotide sequence ID" value="XM_005247891.2"/>
</dbReference>
<dbReference type="RefSeq" id="XP_005247949.1">
    <property type="nucleotide sequence ID" value="XM_005247892.2"/>
</dbReference>
<dbReference type="RefSeq" id="XP_011511607.1">
    <property type="nucleotide sequence ID" value="XM_011513305.2"/>
</dbReference>
<dbReference type="RefSeq" id="XP_016862940.1">
    <property type="nucleotide sequence ID" value="XM_017007451.1"/>
</dbReference>
<dbReference type="RefSeq" id="XP_047305137.1">
    <molecule id="Q9BWV1-3"/>
    <property type="nucleotide sequence ID" value="XM_047449181.1"/>
</dbReference>
<dbReference type="RefSeq" id="XP_047305138.1">
    <molecule id="Q9BWV1-1"/>
    <property type="nucleotide sequence ID" value="XM_047449182.1"/>
</dbReference>
<dbReference type="RefSeq" id="XP_047305139.1">
    <molecule id="Q9BWV1-1"/>
    <property type="nucleotide sequence ID" value="XM_047449183.1"/>
</dbReference>
<dbReference type="RefSeq" id="XP_054204320.1">
    <molecule id="Q9BWV1-3"/>
    <property type="nucleotide sequence ID" value="XM_054348345.1"/>
</dbReference>
<dbReference type="RefSeq" id="XP_054204321.1">
    <molecule id="Q9BWV1-1"/>
    <property type="nucleotide sequence ID" value="XM_054348346.1"/>
</dbReference>
<dbReference type="RefSeq" id="XP_054204322.1">
    <molecule id="Q9BWV1-1"/>
    <property type="nucleotide sequence ID" value="XM_054348347.1"/>
</dbReference>
<dbReference type="PDB" id="3N1G">
    <property type="method" value="X-ray"/>
    <property type="resolution" value="1.90 A"/>
    <property type="chains" value="C/D=710-817"/>
</dbReference>
<dbReference type="PDB" id="3N1M">
    <property type="method" value="X-ray"/>
    <property type="resolution" value="1.69 A"/>
    <property type="chains" value="C=710-817"/>
</dbReference>
<dbReference type="PDB" id="3N1P">
    <property type="method" value="X-ray"/>
    <property type="resolution" value="2.70 A"/>
    <property type="chains" value="C=710-817"/>
</dbReference>
<dbReference type="PDBsum" id="3N1G"/>
<dbReference type="PDBsum" id="3N1M"/>
<dbReference type="PDBsum" id="3N1P"/>
<dbReference type="SMR" id="Q9BWV1"/>
<dbReference type="BioGRID" id="124859">
    <property type="interactions" value="25"/>
</dbReference>
<dbReference type="CORUM" id="Q9BWV1"/>
<dbReference type="FunCoup" id="Q9BWV1">
    <property type="interactions" value="679"/>
</dbReference>
<dbReference type="IntAct" id="Q9BWV1">
    <property type="interactions" value="21"/>
</dbReference>
<dbReference type="STRING" id="9606.ENSP00000273395"/>
<dbReference type="GlyCosmos" id="Q9BWV1">
    <property type="glycosylation" value="9 sites, 1 glycan"/>
</dbReference>
<dbReference type="GlyGen" id="Q9BWV1">
    <property type="glycosylation" value="10 sites, 4 N-linked glycans (2 sites), 2 O-linked glycans (2 sites)"/>
</dbReference>
<dbReference type="iPTMnet" id="Q9BWV1"/>
<dbReference type="PhosphoSitePlus" id="Q9BWV1"/>
<dbReference type="BioMuta" id="BOC"/>
<dbReference type="DMDM" id="74761309"/>
<dbReference type="jPOST" id="Q9BWV1"/>
<dbReference type="MassIVE" id="Q9BWV1"/>
<dbReference type="PaxDb" id="9606-ENSP00000418663"/>
<dbReference type="PeptideAtlas" id="Q9BWV1"/>
<dbReference type="ProteomicsDB" id="79319">
    <molecule id="Q9BWV1-1"/>
</dbReference>
<dbReference type="ProteomicsDB" id="79321">
    <molecule id="Q9BWV1-3"/>
</dbReference>
<dbReference type="Antibodypedia" id="32560">
    <property type="antibodies" value="160 antibodies from 31 providers"/>
</dbReference>
<dbReference type="DNASU" id="91653"/>
<dbReference type="Ensembl" id="ENST00000273395.8">
    <molecule id="Q9BWV1-3"/>
    <property type="protein sequence ID" value="ENSP00000273395.4"/>
    <property type="gene ID" value="ENSG00000144857.15"/>
</dbReference>
<dbReference type="Ensembl" id="ENST00000355385.7">
    <molecule id="Q9BWV1-1"/>
    <property type="protein sequence ID" value="ENSP00000347546.3"/>
    <property type="gene ID" value="ENSG00000144857.15"/>
</dbReference>
<dbReference type="Ensembl" id="ENST00000495514.5">
    <molecule id="Q9BWV1-1"/>
    <property type="protein sequence ID" value="ENSP00000418663.1"/>
    <property type="gene ID" value="ENSG00000144857.15"/>
</dbReference>
<dbReference type="Ensembl" id="ENST00000682979.1">
    <molecule id="Q9BWV1-3"/>
    <property type="protein sequence ID" value="ENSP00000507783.1"/>
    <property type="gene ID" value="ENSG00000144857.15"/>
</dbReference>
<dbReference type="GeneID" id="91653"/>
<dbReference type="KEGG" id="hsa:91653"/>
<dbReference type="MANE-Select" id="ENST00000682979.1">
    <molecule id="Q9BWV1-3"/>
    <property type="protein sequence ID" value="ENSP00000507783.1"/>
    <property type="RefSeq nucleotide sequence ID" value="NM_001378074.1"/>
    <property type="RefSeq protein sequence ID" value="NP_001365003.1"/>
</dbReference>
<dbReference type="UCSC" id="uc003dzx.4">
    <molecule id="Q9BWV1-1"/>
    <property type="organism name" value="human"/>
</dbReference>
<dbReference type="AGR" id="HGNC:17173"/>
<dbReference type="CTD" id="91653"/>
<dbReference type="DisGeNET" id="91653"/>
<dbReference type="GeneCards" id="BOC"/>
<dbReference type="HGNC" id="HGNC:17173">
    <property type="gene designation" value="BOC"/>
</dbReference>
<dbReference type="HPA" id="ENSG00000144857">
    <property type="expression patterns" value="Low tissue specificity"/>
</dbReference>
<dbReference type="MIM" id="608708">
    <property type="type" value="gene"/>
</dbReference>
<dbReference type="neXtProt" id="NX_Q9BWV1"/>
<dbReference type="OpenTargets" id="ENSG00000144857"/>
<dbReference type="PharmGKB" id="PA143485316"/>
<dbReference type="VEuPathDB" id="HostDB:ENSG00000144857"/>
<dbReference type="eggNOG" id="ENOG502QUNT">
    <property type="taxonomic scope" value="Eukaryota"/>
</dbReference>
<dbReference type="GeneTree" id="ENSGT00940000158810"/>
<dbReference type="HOGENOM" id="CLU_008503_0_0_1"/>
<dbReference type="InParanoid" id="Q9BWV1"/>
<dbReference type="OMA" id="KQTSDMC"/>
<dbReference type="OrthoDB" id="9998697at2759"/>
<dbReference type="PAN-GO" id="Q9BWV1">
    <property type="GO annotations" value="4 GO annotations based on evolutionary models"/>
</dbReference>
<dbReference type="PhylomeDB" id="Q9BWV1"/>
<dbReference type="TreeFam" id="TF332268"/>
<dbReference type="PathwayCommons" id="Q9BWV1"/>
<dbReference type="Reactome" id="R-HSA-525793">
    <molecule id="Q9BWV1-1"/>
    <property type="pathway name" value="Myogenesis"/>
</dbReference>
<dbReference type="Reactome" id="R-HSA-5632681">
    <property type="pathway name" value="Ligand-receptor interactions"/>
</dbReference>
<dbReference type="Reactome" id="R-HSA-5635838">
    <property type="pathway name" value="Activation of SMO"/>
</dbReference>
<dbReference type="SignaLink" id="Q9BWV1"/>
<dbReference type="SIGNOR" id="Q9BWV1"/>
<dbReference type="BioGRID-ORCS" id="91653">
    <property type="hits" value="14 hits in 1140 CRISPR screens"/>
</dbReference>
<dbReference type="ChiTaRS" id="BOC">
    <property type="organism name" value="human"/>
</dbReference>
<dbReference type="EvolutionaryTrace" id="Q9BWV1"/>
<dbReference type="GeneWiki" id="BOC_(gene)"/>
<dbReference type="GenomeRNAi" id="91653"/>
<dbReference type="Pharos" id="Q9BWV1">
    <property type="development level" value="Tbio"/>
</dbReference>
<dbReference type="PRO" id="PR:Q9BWV1"/>
<dbReference type="Proteomes" id="UP000005640">
    <property type="component" value="Chromosome 3"/>
</dbReference>
<dbReference type="RNAct" id="Q9BWV1">
    <property type="molecule type" value="protein"/>
</dbReference>
<dbReference type="Bgee" id="ENSG00000144857">
    <property type="expression patterns" value="Expressed in tendon of biceps brachii and 177 other cell types or tissues"/>
</dbReference>
<dbReference type="ExpressionAtlas" id="Q9BWV1">
    <property type="expression patterns" value="baseline and differential"/>
</dbReference>
<dbReference type="GO" id="GO:0030424">
    <property type="term" value="C:axon"/>
    <property type="evidence" value="ECO:0000318"/>
    <property type="project" value="GO_Central"/>
</dbReference>
<dbReference type="GO" id="GO:0044295">
    <property type="term" value="C:axonal growth cone"/>
    <property type="evidence" value="ECO:0007669"/>
    <property type="project" value="Ensembl"/>
</dbReference>
<dbReference type="GO" id="GO:0005886">
    <property type="term" value="C:plasma membrane"/>
    <property type="evidence" value="ECO:0000304"/>
    <property type="project" value="Reactome"/>
</dbReference>
<dbReference type="GO" id="GO:0007411">
    <property type="term" value="P:axon guidance"/>
    <property type="evidence" value="ECO:0000318"/>
    <property type="project" value="GO_Central"/>
</dbReference>
<dbReference type="GO" id="GO:0098609">
    <property type="term" value="P:cell-cell adhesion"/>
    <property type="evidence" value="ECO:0000318"/>
    <property type="project" value="GO_Central"/>
</dbReference>
<dbReference type="GO" id="GO:0007399">
    <property type="term" value="P:nervous system development"/>
    <property type="evidence" value="ECO:0000318"/>
    <property type="project" value="GO_Central"/>
</dbReference>
<dbReference type="GO" id="GO:0045663">
    <property type="term" value="P:positive regulation of myoblast differentiation"/>
    <property type="evidence" value="ECO:0000250"/>
    <property type="project" value="HGNC"/>
</dbReference>
<dbReference type="CDD" id="cd00063">
    <property type="entry name" value="FN3"/>
    <property type="match status" value="3"/>
</dbReference>
<dbReference type="FunFam" id="2.60.40.10:FF:000655">
    <property type="entry name" value="brother of CDO isoform X1"/>
    <property type="match status" value="1"/>
</dbReference>
<dbReference type="FunFam" id="2.60.40.10:FF:000737">
    <property type="entry name" value="brother of CDO isoform X1"/>
    <property type="match status" value="1"/>
</dbReference>
<dbReference type="FunFam" id="2.60.40.10:FF:000852">
    <property type="entry name" value="brother of CDO isoform X1"/>
    <property type="match status" value="1"/>
</dbReference>
<dbReference type="FunFam" id="2.60.40.10:FF:001263">
    <property type="entry name" value="brother of CDO isoform X1"/>
    <property type="match status" value="1"/>
</dbReference>
<dbReference type="FunFam" id="2.60.40.10:FF:000205">
    <property type="entry name" value="Cell adhesion associated, oncogene regulated"/>
    <property type="match status" value="1"/>
</dbReference>
<dbReference type="FunFam" id="2.60.40.10:FF:000327">
    <property type="entry name" value="Cell adhesion associated, oncogene regulated"/>
    <property type="match status" value="1"/>
</dbReference>
<dbReference type="FunFam" id="2.60.40.10:FF:000352">
    <property type="entry name" value="Cell adhesion molecule-related/down-regulated by oncogenes"/>
    <property type="match status" value="1"/>
</dbReference>
<dbReference type="Gene3D" id="2.60.40.10">
    <property type="entry name" value="Immunoglobulins"/>
    <property type="match status" value="7"/>
</dbReference>
<dbReference type="InterPro" id="IPR003961">
    <property type="entry name" value="FN3_dom"/>
</dbReference>
<dbReference type="InterPro" id="IPR036116">
    <property type="entry name" value="FN3_sf"/>
</dbReference>
<dbReference type="InterPro" id="IPR007110">
    <property type="entry name" value="Ig-like_dom"/>
</dbReference>
<dbReference type="InterPro" id="IPR036179">
    <property type="entry name" value="Ig-like_dom_sf"/>
</dbReference>
<dbReference type="InterPro" id="IPR013783">
    <property type="entry name" value="Ig-like_fold"/>
</dbReference>
<dbReference type="InterPro" id="IPR013098">
    <property type="entry name" value="Ig_I-set"/>
</dbReference>
<dbReference type="InterPro" id="IPR003599">
    <property type="entry name" value="Ig_sub"/>
</dbReference>
<dbReference type="InterPro" id="IPR003598">
    <property type="entry name" value="Ig_sub2"/>
</dbReference>
<dbReference type="PANTHER" id="PTHR44170:SF3">
    <property type="entry name" value="BROTHER OF CDO"/>
    <property type="match status" value="1"/>
</dbReference>
<dbReference type="PANTHER" id="PTHR44170">
    <property type="entry name" value="PROTEIN SIDEKICK"/>
    <property type="match status" value="1"/>
</dbReference>
<dbReference type="Pfam" id="PF00041">
    <property type="entry name" value="fn3"/>
    <property type="match status" value="3"/>
</dbReference>
<dbReference type="Pfam" id="PF07679">
    <property type="entry name" value="I-set"/>
    <property type="match status" value="2"/>
</dbReference>
<dbReference type="Pfam" id="PF13927">
    <property type="entry name" value="Ig_3"/>
    <property type="match status" value="2"/>
</dbReference>
<dbReference type="Pfam" id="PF16625">
    <property type="entry name" value="ISET-FN3_linker"/>
    <property type="match status" value="1"/>
</dbReference>
<dbReference type="SMART" id="SM00060">
    <property type="entry name" value="FN3"/>
    <property type="match status" value="3"/>
</dbReference>
<dbReference type="SMART" id="SM00409">
    <property type="entry name" value="IG"/>
    <property type="match status" value="4"/>
</dbReference>
<dbReference type="SMART" id="SM00408">
    <property type="entry name" value="IGc2"/>
    <property type="match status" value="4"/>
</dbReference>
<dbReference type="SUPFAM" id="SSF49265">
    <property type="entry name" value="Fibronectin type III"/>
    <property type="match status" value="2"/>
</dbReference>
<dbReference type="SUPFAM" id="SSF48726">
    <property type="entry name" value="Immunoglobulin"/>
    <property type="match status" value="4"/>
</dbReference>
<dbReference type="PROSITE" id="PS50853">
    <property type="entry name" value="FN3"/>
    <property type="match status" value="3"/>
</dbReference>
<dbReference type="PROSITE" id="PS50835">
    <property type="entry name" value="IG_LIKE"/>
    <property type="match status" value="4"/>
</dbReference>
<evidence type="ECO:0000250" key="1"/>
<evidence type="ECO:0000255" key="2"/>
<evidence type="ECO:0000255" key="3">
    <source>
        <dbReference type="PROSITE-ProRule" id="PRU00114"/>
    </source>
</evidence>
<evidence type="ECO:0000255" key="4">
    <source>
        <dbReference type="PROSITE-ProRule" id="PRU00316"/>
    </source>
</evidence>
<evidence type="ECO:0000256" key="5">
    <source>
        <dbReference type="SAM" id="MobiDB-lite"/>
    </source>
</evidence>
<evidence type="ECO:0000269" key="6">
    <source>
    </source>
</evidence>
<evidence type="ECO:0000269" key="7">
    <source>
    </source>
</evidence>
<evidence type="ECO:0000269" key="8">
    <source>
    </source>
</evidence>
<evidence type="ECO:0000269" key="9">
    <source>
    </source>
</evidence>
<evidence type="ECO:0000269" key="10">
    <source>
    </source>
</evidence>
<evidence type="ECO:0000303" key="11">
    <source>
    </source>
</evidence>
<evidence type="ECO:0000303" key="12">
    <source>
    </source>
</evidence>
<evidence type="ECO:0000305" key="13"/>
<evidence type="ECO:0007829" key="14">
    <source>
        <dbReference type="PDB" id="3N1M"/>
    </source>
</evidence>
<comment type="function">
    <text>Component of a cell-surface receptor complex that mediates cell-cell interactions between muscle precursor cells. Promotes differentiation of myogenic cells.</text>
</comment>
<comment type="subunit">
    <text evidence="1 6 7 10">Part of a complex that contains BOC, CDON, NEO1, cadherins and CTNNB1. Interacts with NTN3 (By similarity). Interacts with SHH, DHH and IHH. Interacts with CDH2 and CTNNB1. Interacts with CDH15 only during the early stages of myoblast differentiation.</text>
</comment>
<comment type="interaction">
    <interactant intactId="EBI-718555">
        <id>Q9BWV1</id>
    </interactant>
    <interactant intactId="EBI-11667804">
        <id>O43323</id>
        <label>DHH</label>
    </interactant>
    <organismsDiffer>false</organismsDiffer>
    <experiments>2</experiments>
</comment>
<comment type="interaction">
    <interactant intactId="EBI-718555">
        <id>Q9BWV1</id>
    </interactant>
    <interactant intactId="EBI-3918622">
        <id>Q14623</id>
        <label>IHH</label>
    </interactant>
    <organismsDiffer>false</organismsDiffer>
    <experiments>2</experiments>
</comment>
<comment type="interaction">
    <interactant intactId="EBI-718555">
        <id>Q9BWV1</id>
    </interactant>
    <interactant intactId="EBI-7016767">
        <id>O35158</id>
        <label>Cdon</label>
    </interactant>
    <organismsDiffer>true</organismsDiffer>
    <experiments>2</experiments>
</comment>
<comment type="interaction">
    <interactant intactId="EBI-718555">
        <id>Q9BWV1</id>
    </interactant>
    <interactant intactId="EBI-15729104">
        <id>Q01721</id>
        <label>Gas1</label>
    </interactant>
    <organismsDiffer>true</organismsDiffer>
    <experiments>2</experiments>
</comment>
<comment type="subcellular location">
    <subcellularLocation>
        <location evidence="7">Cell membrane</location>
        <topology evidence="7">Single-pass type I membrane protein</topology>
    </subcellularLocation>
    <text>Enriched at sites of cell-cell contact.</text>
</comment>
<comment type="alternative products">
    <event type="alternative splicing"/>
    <isoform>
        <id>Q9BWV1-1</id>
        <name>1</name>
        <sequence type="displayed"/>
    </isoform>
    <isoform>
        <id>Q9BWV1-3</id>
        <name>2</name>
        <sequence type="described" ref="VSP_034684"/>
    </isoform>
</comment>
<comment type="tissue specificity">
    <text evidence="6">Detected in skeletal muscle, heart, thymus, kidney and small intestine. Detected at lower levels in brain, placenta, lung and colon mucosa.</text>
</comment>
<comment type="PTM">
    <text evidence="6">N-glycosylated.</text>
</comment>
<comment type="miscellaneous">
    <text>The C-terminal cytoplasmic domain is not required for the stimulation of myogenesis.</text>
</comment>
<comment type="sequence caution" evidence="13">
    <conflict type="miscellaneous discrepancy">
        <sequence resource="EMBL-CDS" id="BAC03436"/>
    </conflict>
    <text>Probable cloning artifact.</text>
</comment>
<comment type="sequence caution" evidence="13">
    <conflict type="erroneous initiation">
        <sequence resource="EMBL-CDS" id="BAC11057"/>
    </conflict>
    <text>Truncated N-terminus.</text>
</comment>
<accession>Q9BWV1</accession>
<accession>A6NJ30</accession>
<accession>B2RMS8</accession>
<accession>D3DN70</accession>
<accession>Q6UXJ5</accession>
<accession>Q8N2P7</accession>
<accession>Q8NF26</accession>
<reference key="1">
    <citation type="journal article" date="2002" name="EMBO J.">
        <title>BOC, an Ig superfamily member, associates with CDO to positively regulate myogenic differentiation.</title>
        <authorList>
            <person name="Kang J.-S."/>
            <person name="Mulieri P.J."/>
            <person name="Hu Y."/>
            <person name="Taliana L."/>
            <person name="Krauss R.S."/>
        </authorList>
    </citation>
    <scope>NUCLEOTIDE SEQUENCE [MRNA] (ISOFORM 1)</scope>
    <scope>INTERACTION WITH CDON</scope>
    <scope>GLYCOSYLATION</scope>
    <scope>TISSUE SPECIFICITY</scope>
    <source>
        <tissue>Fetal brain</tissue>
    </source>
</reference>
<reference key="2">
    <citation type="journal article" date="2003" name="Genome Res.">
        <title>The secreted protein discovery initiative (SPDI), a large-scale effort to identify novel human secreted and transmembrane proteins: a bioinformatics assessment.</title>
        <authorList>
            <person name="Clark H.F."/>
            <person name="Gurney A.L."/>
            <person name="Abaya E."/>
            <person name="Baker K."/>
            <person name="Baldwin D.T."/>
            <person name="Brush J."/>
            <person name="Chen J."/>
            <person name="Chow B."/>
            <person name="Chui C."/>
            <person name="Crowley C."/>
            <person name="Currell B."/>
            <person name="Deuel B."/>
            <person name="Dowd P."/>
            <person name="Eaton D."/>
            <person name="Foster J.S."/>
            <person name="Grimaldi C."/>
            <person name="Gu Q."/>
            <person name="Hass P.E."/>
            <person name="Heldens S."/>
            <person name="Huang A."/>
            <person name="Kim H.S."/>
            <person name="Klimowski L."/>
            <person name="Jin Y."/>
            <person name="Johnson S."/>
            <person name="Lee J."/>
            <person name="Lewis L."/>
            <person name="Liao D."/>
            <person name="Mark M.R."/>
            <person name="Robbie E."/>
            <person name="Sanchez C."/>
            <person name="Schoenfeld J."/>
            <person name="Seshagiri S."/>
            <person name="Simmons L."/>
            <person name="Singh J."/>
            <person name="Smith V."/>
            <person name="Stinson J."/>
            <person name="Vagts A."/>
            <person name="Vandlen R.L."/>
            <person name="Watanabe C."/>
            <person name="Wieand D."/>
            <person name="Woods K."/>
            <person name="Xie M.-H."/>
            <person name="Yansura D.G."/>
            <person name="Yi S."/>
            <person name="Yu G."/>
            <person name="Yuan J."/>
            <person name="Zhang M."/>
            <person name="Zhang Z."/>
            <person name="Goddard A.D."/>
            <person name="Wood W.I."/>
            <person name="Godowski P.J."/>
            <person name="Gray A.M."/>
        </authorList>
    </citation>
    <scope>NUCLEOTIDE SEQUENCE [LARGE SCALE MRNA] (ISOFORM 2)</scope>
</reference>
<reference key="3">
    <citation type="submission" date="2005-09" db="EMBL/GenBank/DDBJ databases">
        <authorList>
            <person name="Mural R.J."/>
            <person name="Istrail S."/>
            <person name="Sutton G.G."/>
            <person name="Florea L."/>
            <person name="Halpern A.L."/>
            <person name="Mobarry C.M."/>
            <person name="Lippert R."/>
            <person name="Walenz B."/>
            <person name="Shatkay H."/>
            <person name="Dew I."/>
            <person name="Miller J.R."/>
            <person name="Flanigan M.J."/>
            <person name="Edwards N.J."/>
            <person name="Bolanos R."/>
            <person name="Fasulo D."/>
            <person name="Halldorsson B.V."/>
            <person name="Hannenhalli S."/>
            <person name="Turner R."/>
            <person name="Yooseph S."/>
            <person name="Lu F."/>
            <person name="Nusskern D.R."/>
            <person name="Shue B.C."/>
            <person name="Zheng X.H."/>
            <person name="Zhong F."/>
            <person name="Delcher A.L."/>
            <person name="Huson D.H."/>
            <person name="Kravitz S.A."/>
            <person name="Mouchard L."/>
            <person name="Reinert K."/>
            <person name="Remington K.A."/>
            <person name="Clark A.G."/>
            <person name="Waterman M.S."/>
            <person name="Eichler E.E."/>
            <person name="Adams M.D."/>
            <person name="Hunkapiller M.W."/>
            <person name="Myers E.W."/>
            <person name="Venter J.C."/>
        </authorList>
    </citation>
    <scope>NUCLEOTIDE SEQUENCE [LARGE SCALE GENOMIC DNA]</scope>
</reference>
<reference key="4">
    <citation type="journal article" date="2004" name="Nat. Genet.">
        <title>Complete sequencing and characterization of 21,243 full-length human cDNAs.</title>
        <authorList>
            <person name="Ota T."/>
            <person name="Suzuki Y."/>
            <person name="Nishikawa T."/>
            <person name="Otsuki T."/>
            <person name="Sugiyama T."/>
            <person name="Irie R."/>
            <person name="Wakamatsu A."/>
            <person name="Hayashi K."/>
            <person name="Sato H."/>
            <person name="Nagai K."/>
            <person name="Kimura K."/>
            <person name="Makita H."/>
            <person name="Sekine M."/>
            <person name="Obayashi M."/>
            <person name="Nishi T."/>
            <person name="Shibahara T."/>
            <person name="Tanaka T."/>
            <person name="Ishii S."/>
            <person name="Yamamoto J."/>
            <person name="Saito K."/>
            <person name="Kawai Y."/>
            <person name="Isono Y."/>
            <person name="Nakamura Y."/>
            <person name="Nagahari K."/>
            <person name="Murakami K."/>
            <person name="Yasuda T."/>
            <person name="Iwayanagi T."/>
            <person name="Wagatsuma M."/>
            <person name="Shiratori A."/>
            <person name="Sudo H."/>
            <person name="Hosoiri T."/>
            <person name="Kaku Y."/>
            <person name="Kodaira H."/>
            <person name="Kondo H."/>
            <person name="Sugawara M."/>
            <person name="Takahashi M."/>
            <person name="Kanda K."/>
            <person name="Yokoi T."/>
            <person name="Furuya T."/>
            <person name="Kikkawa E."/>
            <person name="Omura Y."/>
            <person name="Abe K."/>
            <person name="Kamihara K."/>
            <person name="Katsuta N."/>
            <person name="Sato K."/>
            <person name="Tanikawa M."/>
            <person name="Yamazaki M."/>
            <person name="Ninomiya K."/>
            <person name="Ishibashi T."/>
            <person name="Yamashita H."/>
            <person name="Murakawa K."/>
            <person name="Fujimori K."/>
            <person name="Tanai H."/>
            <person name="Kimata M."/>
            <person name="Watanabe M."/>
            <person name="Hiraoka S."/>
            <person name="Chiba Y."/>
            <person name="Ishida S."/>
            <person name="Ono Y."/>
            <person name="Takiguchi S."/>
            <person name="Watanabe S."/>
            <person name="Yosida M."/>
            <person name="Hotuta T."/>
            <person name="Kusano J."/>
            <person name="Kanehori K."/>
            <person name="Takahashi-Fujii A."/>
            <person name="Hara H."/>
            <person name="Tanase T.-O."/>
            <person name="Nomura Y."/>
            <person name="Togiya S."/>
            <person name="Komai F."/>
            <person name="Hara R."/>
            <person name="Takeuchi K."/>
            <person name="Arita M."/>
            <person name="Imose N."/>
            <person name="Musashino K."/>
            <person name="Yuuki H."/>
            <person name="Oshima A."/>
            <person name="Sasaki N."/>
            <person name="Aotsuka S."/>
            <person name="Yoshikawa Y."/>
            <person name="Matsunawa H."/>
            <person name="Ichihara T."/>
            <person name="Shiohata N."/>
            <person name="Sano S."/>
            <person name="Moriya S."/>
            <person name="Momiyama H."/>
            <person name="Satoh N."/>
            <person name="Takami S."/>
            <person name="Terashima Y."/>
            <person name="Suzuki O."/>
            <person name="Nakagawa S."/>
            <person name="Senoh A."/>
            <person name="Mizoguchi H."/>
            <person name="Goto Y."/>
            <person name="Shimizu F."/>
            <person name="Wakebe H."/>
            <person name="Hishigaki H."/>
            <person name="Watanabe T."/>
            <person name="Sugiyama A."/>
            <person name="Takemoto M."/>
            <person name="Kawakami B."/>
            <person name="Yamazaki M."/>
            <person name="Watanabe K."/>
            <person name="Kumagai A."/>
            <person name="Itakura S."/>
            <person name="Fukuzumi Y."/>
            <person name="Fujimori Y."/>
            <person name="Komiyama M."/>
            <person name="Tashiro H."/>
            <person name="Tanigami A."/>
            <person name="Fujiwara T."/>
            <person name="Ono T."/>
            <person name="Yamada K."/>
            <person name="Fujii Y."/>
            <person name="Ozaki K."/>
            <person name="Hirao M."/>
            <person name="Ohmori Y."/>
            <person name="Kawabata A."/>
            <person name="Hikiji T."/>
            <person name="Kobatake N."/>
            <person name="Inagaki H."/>
            <person name="Ikema Y."/>
            <person name="Okamoto S."/>
            <person name="Okitani R."/>
            <person name="Kawakami T."/>
            <person name="Noguchi S."/>
            <person name="Itoh T."/>
            <person name="Shigeta K."/>
            <person name="Senba T."/>
            <person name="Matsumura K."/>
            <person name="Nakajima Y."/>
            <person name="Mizuno T."/>
            <person name="Morinaga M."/>
            <person name="Sasaki M."/>
            <person name="Togashi T."/>
            <person name="Oyama M."/>
            <person name="Hata H."/>
            <person name="Watanabe M."/>
            <person name="Komatsu T."/>
            <person name="Mizushima-Sugano J."/>
            <person name="Satoh T."/>
            <person name="Shirai Y."/>
            <person name="Takahashi Y."/>
            <person name="Nakagawa K."/>
            <person name="Okumura K."/>
            <person name="Nagase T."/>
            <person name="Nomura N."/>
            <person name="Kikuchi H."/>
            <person name="Masuho Y."/>
            <person name="Yamashita R."/>
            <person name="Nakai K."/>
            <person name="Yada T."/>
            <person name="Nakamura Y."/>
            <person name="Ohara O."/>
            <person name="Isogai T."/>
            <person name="Sugano S."/>
        </authorList>
    </citation>
    <scope>NUCLEOTIDE SEQUENCE [LARGE SCALE MRNA] OF 225-1114 (ISOFORM 1)</scope>
    <scope>NUCLEOTIDE SEQUENCE [LARGE SCALE MRNA] OF 317-1114 (ISOFORM 2)</scope>
    <source>
        <tissue>Embryo</tissue>
        <tissue>Spleen</tissue>
    </source>
</reference>
<reference key="5">
    <citation type="journal article" date="2006" name="Nature">
        <title>The DNA sequence, annotation and analysis of human chromosome 3.</title>
        <authorList>
            <person name="Muzny D.M."/>
            <person name="Scherer S.E."/>
            <person name="Kaul R."/>
            <person name="Wang J."/>
            <person name="Yu J."/>
            <person name="Sudbrak R."/>
            <person name="Buhay C.J."/>
            <person name="Chen R."/>
            <person name="Cree A."/>
            <person name="Ding Y."/>
            <person name="Dugan-Rocha S."/>
            <person name="Gill R."/>
            <person name="Gunaratne P."/>
            <person name="Harris R.A."/>
            <person name="Hawes A.C."/>
            <person name="Hernandez J."/>
            <person name="Hodgson A.V."/>
            <person name="Hume J."/>
            <person name="Jackson A."/>
            <person name="Khan Z.M."/>
            <person name="Kovar-Smith C."/>
            <person name="Lewis L.R."/>
            <person name="Lozado R.J."/>
            <person name="Metzker M.L."/>
            <person name="Milosavljevic A."/>
            <person name="Miner G.R."/>
            <person name="Morgan M.B."/>
            <person name="Nazareth L.V."/>
            <person name="Scott G."/>
            <person name="Sodergren E."/>
            <person name="Song X.-Z."/>
            <person name="Steffen D."/>
            <person name="Wei S."/>
            <person name="Wheeler D.A."/>
            <person name="Wright M.W."/>
            <person name="Worley K.C."/>
            <person name="Yuan Y."/>
            <person name="Zhang Z."/>
            <person name="Adams C.Q."/>
            <person name="Ansari-Lari M.A."/>
            <person name="Ayele M."/>
            <person name="Brown M.J."/>
            <person name="Chen G."/>
            <person name="Chen Z."/>
            <person name="Clendenning J."/>
            <person name="Clerc-Blankenburg K.P."/>
            <person name="Chen R."/>
            <person name="Chen Z."/>
            <person name="Davis C."/>
            <person name="Delgado O."/>
            <person name="Dinh H.H."/>
            <person name="Dong W."/>
            <person name="Draper H."/>
            <person name="Ernst S."/>
            <person name="Fu G."/>
            <person name="Gonzalez-Garay M.L."/>
            <person name="Garcia D.K."/>
            <person name="Gillett W."/>
            <person name="Gu J."/>
            <person name="Hao B."/>
            <person name="Haugen E."/>
            <person name="Havlak P."/>
            <person name="He X."/>
            <person name="Hennig S."/>
            <person name="Hu S."/>
            <person name="Huang W."/>
            <person name="Jackson L.R."/>
            <person name="Jacob L.S."/>
            <person name="Kelly S.H."/>
            <person name="Kube M."/>
            <person name="Levy R."/>
            <person name="Li Z."/>
            <person name="Liu B."/>
            <person name="Liu J."/>
            <person name="Liu W."/>
            <person name="Lu J."/>
            <person name="Maheshwari M."/>
            <person name="Nguyen B.-V."/>
            <person name="Okwuonu G.O."/>
            <person name="Palmeiri A."/>
            <person name="Pasternak S."/>
            <person name="Perez L.M."/>
            <person name="Phelps K.A."/>
            <person name="Plopper F.J."/>
            <person name="Qiang B."/>
            <person name="Raymond C."/>
            <person name="Rodriguez R."/>
            <person name="Saenphimmachak C."/>
            <person name="Santibanez J."/>
            <person name="Shen H."/>
            <person name="Shen Y."/>
            <person name="Subramanian S."/>
            <person name="Tabor P.E."/>
            <person name="Verduzco D."/>
            <person name="Waldron L."/>
            <person name="Wang J."/>
            <person name="Wang J."/>
            <person name="Wang Q."/>
            <person name="Williams G.A."/>
            <person name="Wong G.K.-S."/>
            <person name="Yao Z."/>
            <person name="Zhang J."/>
            <person name="Zhang X."/>
            <person name="Zhao G."/>
            <person name="Zhou J."/>
            <person name="Zhou Y."/>
            <person name="Nelson D."/>
            <person name="Lehrach H."/>
            <person name="Reinhardt R."/>
            <person name="Naylor S.L."/>
            <person name="Yang H."/>
            <person name="Olson M."/>
            <person name="Weinstock G."/>
            <person name="Gibbs R.A."/>
        </authorList>
    </citation>
    <scope>NUCLEOTIDE SEQUENCE [LARGE SCALE GENOMIC DNA]</scope>
</reference>
<reference key="6">
    <citation type="journal article" date="2004" name="Genome Res.">
        <title>The status, quality, and expansion of the NIH full-length cDNA project: the Mammalian Gene Collection (MGC).</title>
        <authorList>
            <consortium name="The MGC Project Team"/>
        </authorList>
    </citation>
    <scope>NUCLEOTIDE SEQUENCE [LARGE SCALE MRNA] (ISOFORM 1)</scope>
</reference>
<reference key="7">
    <citation type="journal article" date="2004" name="Protein Sci.">
        <title>Signal peptide prediction based on analysis of experimentally verified cleavage sites.</title>
        <authorList>
            <person name="Zhang Z."/>
            <person name="Henzel W.J."/>
        </authorList>
    </citation>
    <scope>PROTEIN SEQUENCE OF 31-45</scope>
</reference>
<reference key="8">
    <citation type="journal article" date="2003" name="Proc. Natl. Acad. Sci. U.S.A.">
        <title>Promyogenic members of the Ig and cadherin families associate to positively regulate differentiation.</title>
        <authorList>
            <person name="Kang J.-S."/>
            <person name="Feinleib J.L."/>
            <person name="Knox S."/>
            <person name="Ketteringham M.A."/>
            <person name="Krauss R.S."/>
        </authorList>
    </citation>
    <scope>IDENTIFICATION IN A COMPLEX WITH CDON; CDH2; CDH15 AND CTNNB1</scope>
    <scope>SUBCELLULAR LOCATION</scope>
</reference>
<reference key="9">
    <citation type="journal article" date="2010" name="J. Biol. Chem.">
        <title>All mammalian Hedgehog proteins interact with cell adhesion molecule, down-regulated by oncogenes (CDO) and brother of CDO (BOC) in a conserved manner.</title>
        <authorList>
            <person name="Kavran J.M."/>
            <person name="Ward M.D."/>
            <person name="Oladosu O.O."/>
            <person name="Mulepati S."/>
            <person name="Leahy D.J."/>
        </authorList>
    </citation>
    <scope>X-RAY CRYSTALLOGRAPHY (1.69 ANGSTROMS) OF 710-817 IN COMPLEXES WITH DHH AND IHH</scope>
    <scope>INTERACTION WITH SHH; DHH AND IHH</scope>
</reference>
<reference key="10">
    <citation type="journal article" date="2006" name="Science">
        <title>The consensus coding sequences of human breast and colorectal cancers.</title>
        <authorList>
            <person name="Sjoeblom T."/>
            <person name="Jones S."/>
            <person name="Wood L.D."/>
            <person name="Parsons D.W."/>
            <person name="Lin J."/>
            <person name="Barber T.D."/>
            <person name="Mandelker D."/>
            <person name="Leary R.J."/>
            <person name="Ptak J."/>
            <person name="Silliman N."/>
            <person name="Szabo S."/>
            <person name="Buckhaults P."/>
            <person name="Farrell C."/>
            <person name="Meeh P."/>
            <person name="Markowitz S.D."/>
            <person name="Willis J."/>
            <person name="Dawson D."/>
            <person name="Willson J.K.V."/>
            <person name="Gazdar A.F."/>
            <person name="Hartigan J."/>
            <person name="Wu L."/>
            <person name="Liu C."/>
            <person name="Parmigiani G."/>
            <person name="Park B.H."/>
            <person name="Bachman K.E."/>
            <person name="Papadopoulos N."/>
            <person name="Vogelstein B."/>
            <person name="Kinzler K.W."/>
            <person name="Velculescu V.E."/>
        </authorList>
    </citation>
    <scope>VARIANT [LARGE SCALE ANALYSIS] MET-713</scope>
</reference>
<sequence length="1114" mass="121059">MLRGTMTAWRGMRPEVTLACLLLATAGCFADLNEVPQVTVQPASTVQKPGGTVILGCVVEPPRMNVTWRLNGKELNGSDDALGVLITHGTLVITALNNHTVGRYQCVARMPAGAVASVPATVTLANLQDFKLDVQHVIEVDEGNTAVIACHLPESHPKAQVRYSVKQEWLEASRGNYLIMPSGNLQIVNASQEDEGMYKCAAYNPVTQEVKTSGSSDRLRVRRSTAEAARIIYPPEAQTIIVTKGQSLILECVASGIPPPRVTWAKDGSSVTGYNKTRFLLSNLLIDTTSEEDSGTYRCMADNGVGQPGAAVILYNVQVFEPPEVTMELSQLVIPWGQSAKLTCEVRGNPPPSVLWLRNAVPLISSQRLRLSRRALRVLSMGPEDEGVYQCMAENEVGSAHAVVQLRTSRPSITPRLWQDAELATGTPPVSPSKLGNPEQMLRGQPALPRPPTSVGPASPQCPGEKGQGAPAEAPIILSSPRTSKTDSYELVWRPRHEGSGRAPILYYVVKHRKVTNSSDDWTISGIPANQHRLTLTRLDPGSLYEVEMAAYNCAGEGQTAMVTFRTGRRPKPEIMASKEQQIQRDDPGASPQSSSQPDHGRLSPPEAPDRPTISTASETSVYVTWIPRGNGGFPIQSFRVEYKKLKKVGDWILATSAIPPSRLSVEITGLEKGTSYKFRVRALNMLGESEPSAPSRPYVVSGYSGRVYERPVAGPYITFTDAVNETTIMLKWMYIPASNNNTPIHGFYIYYRPTDSDNDSDYKKDMVEGDKYWHSISHLQPETSYDIKMQCFNEGGESEFSNVMICETKARKSSGQPGRLPPPTLAPPQPPLPETIERPVGTGAMVARSSDLPYLIVGVVLGSIVLIIVTFIPFCLWRAWSKQKHTTDLGFPRSALPPSCPYTMVPLGGLPGHQASGQPYLSGISGRACANGIHMNRGCPSAAVGYPGMKPQQHCPGELQQQSDTSSLLRQTHLGNGYDPQSHQITRGPKSSPDEGSFLYTLPDDSTHQLLQPHHDCCQRQEQPAAVGQSGVRRAPDSPVLEAVWDPPFHSGPPCCLGLVPVEEVDSPDSCQVSGGDWCPQHPVGAYVGQEPGMQLSPGPLVRVSFETPPLTI</sequence>
<keyword id="KW-0002">3D-structure</keyword>
<keyword id="KW-0025">Alternative splicing</keyword>
<keyword id="KW-0130">Cell adhesion</keyword>
<keyword id="KW-1003">Cell membrane</keyword>
<keyword id="KW-0903">Direct protein sequencing</keyword>
<keyword id="KW-1015">Disulfide bond</keyword>
<keyword id="KW-0325">Glycoprotein</keyword>
<keyword id="KW-0393">Immunoglobulin domain</keyword>
<keyword id="KW-0472">Membrane</keyword>
<keyword id="KW-1267">Proteomics identification</keyword>
<keyword id="KW-1185">Reference proteome</keyword>
<keyword id="KW-0677">Repeat</keyword>
<keyword id="KW-0732">Signal</keyword>
<keyword id="KW-0812">Transmembrane</keyword>
<keyword id="KW-1133">Transmembrane helix</keyword>
<protein>
    <recommendedName>
        <fullName>Brother of CDO</fullName>
        <shortName>Protein BOC</shortName>
    </recommendedName>
</protein>
<gene>
    <name type="primary">BOC</name>
    <name type="ORF">UNQ604/PRO1190</name>
</gene>